<accession>A8FTV8</accession>
<gene>
    <name evidence="1" type="primary">yciB</name>
    <name type="ordered locus">Ssed_1670</name>
</gene>
<sequence length="183" mass="21078">MKQLLDFLPLVIFFAVYKLFDIYAASGALIAATALQLIVTYLLYKKIEKMHLITFVMVTVFGTLTLVFHDDAFIKWKVTVVYALFAIALAVSQLINKPILKSMLGKELVVEDRIWAHVTWYWVSFFITCALVNIYVAFSLPQEVWVNFKVFGLTALTLVNTVITVIYLYKNMPEEHKKELNNK</sequence>
<comment type="function">
    <text evidence="1">Plays a role in cell envelope biogenesis, maintenance of cell envelope integrity and membrane homeostasis.</text>
</comment>
<comment type="subcellular location">
    <subcellularLocation>
        <location evidence="1">Cell inner membrane</location>
        <topology evidence="1">Multi-pass membrane protein</topology>
    </subcellularLocation>
</comment>
<comment type="similarity">
    <text evidence="1">Belongs to the YciB family.</text>
</comment>
<feature type="chain" id="PRO_1000077496" description="Inner membrane-spanning protein YciB">
    <location>
        <begin position="1"/>
        <end position="183"/>
    </location>
</feature>
<feature type="transmembrane region" description="Helical" evidence="1">
    <location>
        <begin position="10"/>
        <end position="30"/>
    </location>
</feature>
<feature type="transmembrane region" description="Helical" evidence="1">
    <location>
        <begin position="50"/>
        <end position="70"/>
    </location>
</feature>
<feature type="transmembrane region" description="Helical" evidence="1">
    <location>
        <begin position="72"/>
        <end position="92"/>
    </location>
</feature>
<feature type="transmembrane region" description="Helical" evidence="1">
    <location>
        <begin position="118"/>
        <end position="138"/>
    </location>
</feature>
<feature type="transmembrane region" description="Helical" evidence="1">
    <location>
        <begin position="148"/>
        <end position="168"/>
    </location>
</feature>
<reference key="1">
    <citation type="submission" date="2007-08" db="EMBL/GenBank/DDBJ databases">
        <title>Complete sequence of Shewanella sediminis HAW-EB3.</title>
        <authorList>
            <consortium name="US DOE Joint Genome Institute"/>
            <person name="Copeland A."/>
            <person name="Lucas S."/>
            <person name="Lapidus A."/>
            <person name="Barry K."/>
            <person name="Glavina del Rio T."/>
            <person name="Dalin E."/>
            <person name="Tice H."/>
            <person name="Pitluck S."/>
            <person name="Chertkov O."/>
            <person name="Brettin T."/>
            <person name="Bruce D."/>
            <person name="Detter J.C."/>
            <person name="Han C."/>
            <person name="Schmutz J."/>
            <person name="Larimer F."/>
            <person name="Land M."/>
            <person name="Hauser L."/>
            <person name="Kyrpides N."/>
            <person name="Kim E."/>
            <person name="Zhao J.-S."/>
            <person name="Richardson P."/>
        </authorList>
    </citation>
    <scope>NUCLEOTIDE SEQUENCE [LARGE SCALE GENOMIC DNA]</scope>
    <source>
        <strain>HAW-EB3</strain>
    </source>
</reference>
<dbReference type="EMBL" id="CP000821">
    <property type="protein sequence ID" value="ABV36281.1"/>
    <property type="molecule type" value="Genomic_DNA"/>
</dbReference>
<dbReference type="RefSeq" id="WP_012142017.1">
    <property type="nucleotide sequence ID" value="NC_009831.1"/>
</dbReference>
<dbReference type="STRING" id="425104.Ssed_1670"/>
<dbReference type="KEGG" id="sse:Ssed_1670"/>
<dbReference type="eggNOG" id="COG2917">
    <property type="taxonomic scope" value="Bacteria"/>
</dbReference>
<dbReference type="HOGENOM" id="CLU_089554_2_0_6"/>
<dbReference type="OrthoDB" id="9788219at2"/>
<dbReference type="Proteomes" id="UP000002015">
    <property type="component" value="Chromosome"/>
</dbReference>
<dbReference type="GO" id="GO:0005886">
    <property type="term" value="C:plasma membrane"/>
    <property type="evidence" value="ECO:0007669"/>
    <property type="project" value="UniProtKB-SubCell"/>
</dbReference>
<dbReference type="HAMAP" id="MF_00189">
    <property type="entry name" value="YciB"/>
    <property type="match status" value="1"/>
</dbReference>
<dbReference type="InterPro" id="IPR006008">
    <property type="entry name" value="YciB"/>
</dbReference>
<dbReference type="NCBIfam" id="TIGR00997">
    <property type="entry name" value="ispZ"/>
    <property type="match status" value="1"/>
</dbReference>
<dbReference type="NCBIfam" id="NF001324">
    <property type="entry name" value="PRK00259.1-2"/>
    <property type="match status" value="1"/>
</dbReference>
<dbReference type="PANTHER" id="PTHR36917:SF1">
    <property type="entry name" value="INNER MEMBRANE-SPANNING PROTEIN YCIB"/>
    <property type="match status" value="1"/>
</dbReference>
<dbReference type="PANTHER" id="PTHR36917">
    <property type="entry name" value="INTRACELLULAR SEPTATION PROTEIN A-RELATED"/>
    <property type="match status" value="1"/>
</dbReference>
<dbReference type="Pfam" id="PF04279">
    <property type="entry name" value="IspA"/>
    <property type="match status" value="1"/>
</dbReference>
<proteinExistence type="inferred from homology"/>
<evidence type="ECO:0000255" key="1">
    <source>
        <dbReference type="HAMAP-Rule" id="MF_00189"/>
    </source>
</evidence>
<protein>
    <recommendedName>
        <fullName evidence="1">Inner membrane-spanning protein YciB</fullName>
    </recommendedName>
</protein>
<keyword id="KW-0997">Cell inner membrane</keyword>
<keyword id="KW-1003">Cell membrane</keyword>
<keyword id="KW-0472">Membrane</keyword>
<keyword id="KW-1185">Reference proteome</keyword>
<keyword id="KW-0812">Transmembrane</keyword>
<keyword id="KW-1133">Transmembrane helix</keyword>
<name>YCIB_SHESH</name>
<organism>
    <name type="scientific">Shewanella sediminis (strain HAW-EB3)</name>
    <dbReference type="NCBI Taxonomy" id="425104"/>
    <lineage>
        <taxon>Bacteria</taxon>
        <taxon>Pseudomonadati</taxon>
        <taxon>Pseudomonadota</taxon>
        <taxon>Gammaproteobacteria</taxon>
        <taxon>Alteromonadales</taxon>
        <taxon>Shewanellaceae</taxon>
        <taxon>Shewanella</taxon>
    </lineage>
</organism>